<gene>
    <name evidence="1" type="primary">nanM</name>
    <name type="ordered locus">SPAB_02408</name>
</gene>
<accession>A9N6P2</accession>
<name>NANM_SALPB</name>
<organism>
    <name type="scientific">Salmonella paratyphi B (strain ATCC BAA-1250 / SPB7)</name>
    <dbReference type="NCBI Taxonomy" id="1016998"/>
    <lineage>
        <taxon>Bacteria</taxon>
        <taxon>Pseudomonadati</taxon>
        <taxon>Pseudomonadota</taxon>
        <taxon>Gammaproteobacteria</taxon>
        <taxon>Enterobacterales</taxon>
        <taxon>Enterobacteriaceae</taxon>
        <taxon>Salmonella</taxon>
    </lineage>
</organism>
<comment type="function">
    <text evidence="1">Converts alpha-N-acetylneuranimic acid (Neu5Ac) to the beta-anomer, accelerating the equilibrium between the alpha- and beta-anomers. Probably facilitates sialidase-negative bacteria to compete successfully for limited amounts of extracellular Neu5Ac, which is likely taken up in the beta-anomer. In addition, the rapid removal of sialic acid from solution might be advantageous to the bacterium to damp down host responses.</text>
</comment>
<comment type="catalytic activity">
    <reaction evidence="1">
        <text>N-acetyl-alpha-neuraminate = N-acetyl-beta-neuraminate</text>
        <dbReference type="Rhea" id="RHEA:25233"/>
        <dbReference type="ChEBI" id="CHEBI:58705"/>
        <dbReference type="ChEBI" id="CHEBI:58770"/>
        <dbReference type="EC" id="5.1.3.24"/>
    </reaction>
</comment>
<comment type="subunit">
    <text evidence="1">Homodimer.</text>
</comment>
<comment type="subcellular location">
    <subcellularLocation>
        <location evidence="1">Periplasm</location>
    </subcellularLocation>
</comment>
<comment type="similarity">
    <text evidence="1">Belongs to the NanM family.</text>
</comment>
<comment type="sequence caution" evidence="2">
    <conflict type="erroneous initiation">
        <sequence resource="EMBL-CDS" id="ABX67789"/>
    </conflict>
</comment>
<keyword id="KW-0119">Carbohydrate metabolism</keyword>
<keyword id="KW-0413">Isomerase</keyword>
<keyword id="KW-0880">Kelch repeat</keyword>
<keyword id="KW-0574">Periplasm</keyword>
<keyword id="KW-0677">Repeat</keyword>
<keyword id="KW-0732">Signal</keyword>
<reference key="1">
    <citation type="submission" date="2007-11" db="EMBL/GenBank/DDBJ databases">
        <authorList>
            <consortium name="The Salmonella enterica serovar Paratyphi B Genome Sequencing Project"/>
            <person name="McClelland M."/>
            <person name="Sanderson E.K."/>
            <person name="Porwollik S."/>
            <person name="Spieth J."/>
            <person name="Clifton W.S."/>
            <person name="Fulton R."/>
            <person name="Cordes M."/>
            <person name="Wollam A."/>
            <person name="Shah N."/>
            <person name="Pepin K."/>
            <person name="Bhonagiri V."/>
            <person name="Nash W."/>
            <person name="Johnson M."/>
            <person name="Thiruvilangam P."/>
            <person name="Wilson R."/>
        </authorList>
    </citation>
    <scope>NUCLEOTIDE SEQUENCE [LARGE SCALE GENOMIC DNA]</scope>
    <source>
        <strain>ATCC BAA-1250 / SPB7</strain>
    </source>
</reference>
<evidence type="ECO:0000255" key="1">
    <source>
        <dbReference type="HAMAP-Rule" id="MF_01195"/>
    </source>
</evidence>
<evidence type="ECO:0000305" key="2"/>
<sequence length="386" mass="42573">MGMQMKNFKKMMTLMALCLSVAITTSGYATTLPDIPEPLKNGTGAIDNNGVIYVGLGTAGTSWYKIDLKKQHKDWERIKSFPGGAREQSVSVFLNDELYVFGGVGKKNSESPLQVYSDVYKYSPVKNTWQKVDTISPVGLTGHTGVKLNETMVLITGGVNEHIFDKYFIDIAAAAADESEKNKVIYNYFNKPAKDYFFNKIVFIYNAKENTWKNAGELPDAGTAGSSSVMENNFLMLINGELKPGLRTDVIYRAMWDNDKLTWLKNSQLPPSPGEQQQEGLAGAFSGYSHGVLLVGGGANFPGAKQNYTNGKFYSHEGINKKWRDEVYGLVNGHWQYMGKMKQPLGYGVSVSYGDEVFLIGGENAKGKPVSSVTSFTMRDGNLLIK</sequence>
<dbReference type="EC" id="5.1.3.24" evidence="1"/>
<dbReference type="EMBL" id="CP000886">
    <property type="protein sequence ID" value="ABX67789.1"/>
    <property type="status" value="ALT_INIT"/>
    <property type="molecule type" value="Genomic_DNA"/>
</dbReference>
<dbReference type="RefSeq" id="WP_000525756.1">
    <property type="nucleotide sequence ID" value="NC_010102.1"/>
</dbReference>
<dbReference type="SMR" id="A9N6P2"/>
<dbReference type="KEGG" id="spq:SPAB_02408"/>
<dbReference type="PATRIC" id="fig|1016998.12.peg.2279"/>
<dbReference type="HOGENOM" id="CLU_061535_0_0_6"/>
<dbReference type="BioCyc" id="SENT1016998:SPAB_RS09810-MONOMER"/>
<dbReference type="Proteomes" id="UP000008556">
    <property type="component" value="Chromosome"/>
</dbReference>
<dbReference type="GO" id="GO:0042597">
    <property type="term" value="C:periplasmic space"/>
    <property type="evidence" value="ECO:0007669"/>
    <property type="project" value="UniProtKB-SubCell"/>
</dbReference>
<dbReference type="GO" id="GO:0016857">
    <property type="term" value="F:racemase and epimerase activity, acting on carbohydrates and derivatives"/>
    <property type="evidence" value="ECO:0007669"/>
    <property type="project" value="UniProtKB-UniRule"/>
</dbReference>
<dbReference type="Gene3D" id="2.120.10.80">
    <property type="entry name" value="Kelch-type beta propeller"/>
    <property type="match status" value="2"/>
</dbReference>
<dbReference type="HAMAP" id="MF_01195">
    <property type="entry name" value="NanM"/>
    <property type="match status" value="1"/>
</dbReference>
<dbReference type="InterPro" id="IPR015915">
    <property type="entry name" value="Kelch-typ_b-propeller"/>
</dbReference>
<dbReference type="InterPro" id="IPR056734">
    <property type="entry name" value="NANM"/>
</dbReference>
<dbReference type="InterPro" id="IPR019936">
    <property type="entry name" value="NanM_proteobact"/>
</dbReference>
<dbReference type="NCBIfam" id="TIGR03547">
    <property type="entry name" value="muta_rot_YjhT"/>
    <property type="match status" value="1"/>
</dbReference>
<dbReference type="NCBIfam" id="NF010730">
    <property type="entry name" value="PRK14131.1"/>
    <property type="match status" value="1"/>
</dbReference>
<dbReference type="PANTHER" id="PTHR46093">
    <property type="entry name" value="ACYL-COA-BINDING DOMAIN-CONTAINING PROTEIN 5"/>
    <property type="match status" value="1"/>
</dbReference>
<dbReference type="PANTHER" id="PTHR46093:SF18">
    <property type="entry name" value="FIBRONECTIN TYPE-III DOMAIN-CONTAINING PROTEIN"/>
    <property type="match status" value="1"/>
</dbReference>
<dbReference type="Pfam" id="PF24996">
    <property type="entry name" value="NANM"/>
    <property type="match status" value="1"/>
</dbReference>
<dbReference type="SUPFAM" id="SSF117281">
    <property type="entry name" value="Kelch motif"/>
    <property type="match status" value="1"/>
</dbReference>
<protein>
    <recommendedName>
        <fullName evidence="1">N-acetylneuraminate epimerase</fullName>
        <ecNumber evidence="1">5.1.3.24</ecNumber>
    </recommendedName>
    <alternativeName>
        <fullName evidence="1">N-acetylneuraminate mutarotase</fullName>
        <shortName evidence="1">Neu5Ac mutarotase</shortName>
    </alternativeName>
    <alternativeName>
        <fullName evidence="1">Sialic acid epimerase</fullName>
    </alternativeName>
</protein>
<proteinExistence type="inferred from homology"/>
<feature type="signal peptide" evidence="1">
    <location>
        <begin position="1"/>
        <end position="29"/>
    </location>
</feature>
<feature type="chain" id="PRO_0000333066" description="N-acetylneuraminate epimerase">
    <location>
        <begin position="30"/>
        <end position="386"/>
    </location>
</feature>
<feature type="repeat" description="Kelch 1">
    <location>
        <begin position="51"/>
        <end position="95"/>
    </location>
</feature>
<feature type="repeat" description="Kelch 2">
    <location>
        <begin position="97"/>
        <end position="149"/>
    </location>
</feature>
<feature type="repeat" description="Kelch 3">
    <location>
        <begin position="151"/>
        <end position="186"/>
    </location>
</feature>
<feature type="repeat" description="Kelch 4">
    <location>
        <begin position="187"/>
        <end position="232"/>
    </location>
</feature>
<feature type="repeat" description="Kelch 5">
    <location>
        <begin position="235"/>
        <end position="284"/>
    </location>
</feature>
<feature type="repeat" description="Kelch 6">
    <location>
        <begin position="306"/>
        <end position="355"/>
    </location>
</feature>
<feature type="repeat" description="Kelch 7">
    <location>
        <begin position="357"/>
        <end position="386"/>
    </location>
</feature>
<feature type="active site" description="Proton acceptor" evidence="1">
    <location>
        <position position="241"/>
    </location>
</feature>